<accession>B9JRA7</accession>
<organism>
    <name type="scientific">Allorhizobium ampelinum (strain ATCC BAA-846 / DSM 112012 / S4)</name>
    <name type="common">Agrobacterium vitis (strain S4)</name>
    <dbReference type="NCBI Taxonomy" id="311402"/>
    <lineage>
        <taxon>Bacteria</taxon>
        <taxon>Pseudomonadati</taxon>
        <taxon>Pseudomonadota</taxon>
        <taxon>Alphaproteobacteria</taxon>
        <taxon>Hyphomicrobiales</taxon>
        <taxon>Rhizobiaceae</taxon>
        <taxon>Rhizobium/Agrobacterium group</taxon>
        <taxon>Allorhizobium</taxon>
        <taxon>Allorhizobium ampelinum</taxon>
    </lineage>
</organism>
<keyword id="KW-0131">Cell cycle</keyword>
<keyword id="KW-0132">Cell division</keyword>
<keyword id="KW-1185">Reference proteome</keyword>
<keyword id="KW-0717">Septation</keyword>
<sequence>MTEVLTEPRSIRIKGRSFLAVVLSPDLPVDNWLERLDDLASRSAGFFLGRPVVLDVAELAISRDELKALIAELSSRNVSIMGLEGARPSMVERGMPPILKGGRPVSDVDVPKVEPESPPAEEKKKTGKATKASGKSDEIGETDSPQAMITAPQARSVVQSLLLREPVRSGQSVIFTEGDVTVIGSVASGAEIIAGGSIHIYGALRGRAMAGSVGNASARIFCRKMEAELLAIDGIYKMAEDMPPELLGKPVQLWLEDDVIKAEKMA</sequence>
<protein>
    <recommendedName>
        <fullName evidence="1">Probable septum site-determining protein MinC</fullName>
    </recommendedName>
</protein>
<gene>
    <name evidence="1" type="primary">minC</name>
    <name type="ordered locus">Avi_3508</name>
</gene>
<feature type="chain" id="PRO_1000191227" description="Probable septum site-determining protein MinC">
    <location>
        <begin position="1"/>
        <end position="266"/>
    </location>
</feature>
<feature type="region of interest" description="Disordered" evidence="2">
    <location>
        <begin position="98"/>
        <end position="146"/>
    </location>
</feature>
<feature type="compositionally biased region" description="Basic and acidic residues" evidence="2">
    <location>
        <begin position="109"/>
        <end position="124"/>
    </location>
</feature>
<evidence type="ECO:0000255" key="1">
    <source>
        <dbReference type="HAMAP-Rule" id="MF_00267"/>
    </source>
</evidence>
<evidence type="ECO:0000256" key="2">
    <source>
        <dbReference type="SAM" id="MobiDB-lite"/>
    </source>
</evidence>
<reference key="1">
    <citation type="journal article" date="2009" name="J. Bacteriol.">
        <title>Genome sequences of three Agrobacterium biovars help elucidate the evolution of multichromosome genomes in bacteria.</title>
        <authorList>
            <person name="Slater S.C."/>
            <person name="Goldman B.S."/>
            <person name="Goodner B."/>
            <person name="Setubal J.C."/>
            <person name="Farrand S.K."/>
            <person name="Nester E.W."/>
            <person name="Burr T.J."/>
            <person name="Banta L."/>
            <person name="Dickerman A.W."/>
            <person name="Paulsen I."/>
            <person name="Otten L."/>
            <person name="Suen G."/>
            <person name="Welch R."/>
            <person name="Almeida N.F."/>
            <person name="Arnold F."/>
            <person name="Burton O.T."/>
            <person name="Du Z."/>
            <person name="Ewing A."/>
            <person name="Godsy E."/>
            <person name="Heisel S."/>
            <person name="Houmiel K.L."/>
            <person name="Jhaveri J."/>
            <person name="Lu J."/>
            <person name="Miller N.M."/>
            <person name="Norton S."/>
            <person name="Chen Q."/>
            <person name="Phoolcharoen W."/>
            <person name="Ohlin V."/>
            <person name="Ondrusek D."/>
            <person name="Pride N."/>
            <person name="Stricklin S.L."/>
            <person name="Sun J."/>
            <person name="Wheeler C."/>
            <person name="Wilson L."/>
            <person name="Zhu H."/>
            <person name="Wood D.W."/>
        </authorList>
    </citation>
    <scope>NUCLEOTIDE SEQUENCE [LARGE SCALE GENOMIC DNA]</scope>
    <source>
        <strain>ATCC BAA-846 / DSM 112012 / S4</strain>
    </source>
</reference>
<dbReference type="EMBL" id="CP000633">
    <property type="protein sequence ID" value="ACM37518.1"/>
    <property type="molecule type" value="Genomic_DNA"/>
</dbReference>
<dbReference type="RefSeq" id="WP_015916931.1">
    <property type="nucleotide sequence ID" value="NC_011989.1"/>
</dbReference>
<dbReference type="SMR" id="B9JRA7"/>
<dbReference type="STRING" id="311402.Avi_3508"/>
<dbReference type="KEGG" id="avi:Avi_3508"/>
<dbReference type="eggNOG" id="COG0850">
    <property type="taxonomic scope" value="Bacteria"/>
</dbReference>
<dbReference type="HOGENOM" id="CLU_067812_1_0_5"/>
<dbReference type="Proteomes" id="UP000001596">
    <property type="component" value="Chromosome 1"/>
</dbReference>
<dbReference type="GO" id="GO:0000902">
    <property type="term" value="P:cell morphogenesis"/>
    <property type="evidence" value="ECO:0007669"/>
    <property type="project" value="InterPro"/>
</dbReference>
<dbReference type="GO" id="GO:0000917">
    <property type="term" value="P:division septum assembly"/>
    <property type="evidence" value="ECO:0007669"/>
    <property type="project" value="UniProtKB-KW"/>
</dbReference>
<dbReference type="GO" id="GO:0051302">
    <property type="term" value="P:regulation of cell division"/>
    <property type="evidence" value="ECO:0007669"/>
    <property type="project" value="InterPro"/>
</dbReference>
<dbReference type="GO" id="GO:1901891">
    <property type="term" value="P:regulation of cell septum assembly"/>
    <property type="evidence" value="ECO:0007669"/>
    <property type="project" value="InterPro"/>
</dbReference>
<dbReference type="Gene3D" id="2.160.20.70">
    <property type="match status" value="1"/>
</dbReference>
<dbReference type="Gene3D" id="3.30.70.260">
    <property type="match status" value="1"/>
</dbReference>
<dbReference type="HAMAP" id="MF_00267">
    <property type="entry name" value="MinC"/>
    <property type="match status" value="1"/>
</dbReference>
<dbReference type="InterPro" id="IPR016098">
    <property type="entry name" value="CAP/MinC_C"/>
</dbReference>
<dbReference type="InterPro" id="IPR013033">
    <property type="entry name" value="MinC"/>
</dbReference>
<dbReference type="InterPro" id="IPR036145">
    <property type="entry name" value="MinC_C_sf"/>
</dbReference>
<dbReference type="InterPro" id="IPR007874">
    <property type="entry name" value="MinC_N"/>
</dbReference>
<dbReference type="InterPro" id="IPR005526">
    <property type="entry name" value="Septum_form_inhib_MinC_C"/>
</dbReference>
<dbReference type="NCBIfam" id="TIGR01222">
    <property type="entry name" value="minC"/>
    <property type="match status" value="1"/>
</dbReference>
<dbReference type="PANTHER" id="PTHR34108">
    <property type="entry name" value="SEPTUM SITE-DETERMINING PROTEIN MINC"/>
    <property type="match status" value="1"/>
</dbReference>
<dbReference type="PANTHER" id="PTHR34108:SF1">
    <property type="entry name" value="SEPTUM SITE-DETERMINING PROTEIN MINC"/>
    <property type="match status" value="1"/>
</dbReference>
<dbReference type="Pfam" id="PF03775">
    <property type="entry name" value="MinC_C"/>
    <property type="match status" value="1"/>
</dbReference>
<dbReference type="Pfam" id="PF05209">
    <property type="entry name" value="MinC_N"/>
    <property type="match status" value="1"/>
</dbReference>
<dbReference type="SUPFAM" id="SSF63848">
    <property type="entry name" value="Cell-division inhibitor MinC, C-terminal domain"/>
    <property type="match status" value="1"/>
</dbReference>
<comment type="function">
    <text evidence="1">Cell division inhibitor that blocks the formation of polar Z ring septums. Rapidly oscillates between the poles of the cell to destabilize FtsZ filaments that have formed before they mature into polar Z rings. Prevents FtsZ polymerization.</text>
</comment>
<comment type="subunit">
    <text evidence="1">Interacts with MinD and FtsZ.</text>
</comment>
<comment type="similarity">
    <text evidence="1">Belongs to the MinC family.</text>
</comment>
<proteinExistence type="inferred from homology"/>
<name>MINC_ALLAM</name>